<proteinExistence type="inferred from homology"/>
<evidence type="ECO:0000255" key="1">
    <source>
        <dbReference type="HAMAP-Rule" id="MF_01858"/>
    </source>
</evidence>
<reference key="1">
    <citation type="journal article" date="2005" name="Nucleic Acids Res.">
        <title>The genome sequence of Xanthomonas oryzae pathovar oryzae KACC10331, the bacterial blight pathogen of rice.</title>
        <authorList>
            <person name="Lee B.-M."/>
            <person name="Park Y.-J."/>
            <person name="Park D.-S."/>
            <person name="Kang H.-W."/>
            <person name="Kim J.-G."/>
            <person name="Song E.-S."/>
            <person name="Park I.-C."/>
            <person name="Yoon U.-H."/>
            <person name="Hahn J.-H."/>
            <person name="Koo B.-S."/>
            <person name="Lee G.-B."/>
            <person name="Kim H."/>
            <person name="Park H.-S."/>
            <person name="Yoon K.-O."/>
            <person name="Kim J.-H."/>
            <person name="Jung C.-H."/>
            <person name="Koh N.-H."/>
            <person name="Seo J.-S."/>
            <person name="Go S.-J."/>
        </authorList>
    </citation>
    <scope>NUCLEOTIDE SEQUENCE [LARGE SCALE GENOMIC DNA]</scope>
    <source>
        <strain>KACC10331 / KXO85</strain>
    </source>
</reference>
<feature type="chain" id="PRO_0000366858" description="Ribosomal RNA large subunit methyltransferase K/L">
    <location>
        <begin position="1"/>
        <end position="711"/>
    </location>
</feature>
<feature type="domain" description="THUMP" evidence="1">
    <location>
        <begin position="42"/>
        <end position="153"/>
    </location>
</feature>
<protein>
    <recommendedName>
        <fullName evidence="1">Ribosomal RNA large subunit methyltransferase K/L</fullName>
    </recommendedName>
    <domain>
        <recommendedName>
            <fullName evidence="1">23S rRNA m2G2445 methyltransferase</fullName>
            <ecNumber evidence="1">2.1.1.173</ecNumber>
        </recommendedName>
        <alternativeName>
            <fullName evidence="1">rRNA (guanine-N(2)-)-methyltransferase RlmL</fullName>
        </alternativeName>
    </domain>
    <domain>
        <recommendedName>
            <fullName evidence="1">23S rRNA m7G2069 methyltransferase</fullName>
            <ecNumber evidence="1">2.1.1.264</ecNumber>
        </recommendedName>
        <alternativeName>
            <fullName evidence="1">rRNA (guanine-N(7)-)-methyltransferase RlmK</fullName>
        </alternativeName>
    </domain>
</protein>
<sequence length="711" mass="78076">MKFFASCAKGLEYLLADELLALGASKATATISGVNVEGELRDAQRAVLWSRLASRVLWPLSEFDCPDEDALYAGVAELPWDAHLSVGHTLSVDAHVSGTAITHARYAAQRIKDAVVDTMRRQGLERPSVDVESPDLRLNLSLRKGRATISVDLGGGPLHRRGWRMAQNEAPLKENLAAAVLMRGGWPRAYADGGGLLDPMCGSGTLLIEGALMAADVAPGLQRYGSDLPSRWRGFDRNGWQQLVSEARERDSVGRAALKQVIHGSDMDPHAIRAAKENAQVAGVAEAIWFGVCEVGELQTPPQATGVVVCNPPYDERLAADAALYRRLGDTLQCAVPQWRASLLCGNAELAYATGLRAGKKYQLFNGAIECALIVCDPIAVPRRTPLAAPTALSEGAQMVANRLRKNLQKFKKWRAREGVECFRAYDADLPEYSAAIDVYQQADGDRRIFLHVQEYAAPATIPEADVRRRLNELLAAAREVFEVPAERVALKSRERGKGGSKYGRFEQRNEIVHVREHGALLRVNLFDYLDTGLFLDHRPLRGTMAQQSRGRRFLNLFCYTGVASVEAAVAGAASTTSVDLSGTYLQWCADNLALNGLAGSKHKLVQADALAWLEAERAHFDVIFCDPPTFSNSARAEDFDIQRAHVRLLRAAVARLAPGGVLYFSNNFRRFKLDEEGVAEFAQCEDISPSTIDPDFERHARIHRAWRLTA</sequence>
<comment type="function">
    <text evidence="1">Specifically methylates the guanine in position 2445 (m2G2445) and the guanine in position 2069 (m7G2069) of 23S rRNA.</text>
</comment>
<comment type="catalytic activity">
    <reaction evidence="1">
        <text>guanosine(2445) in 23S rRNA + S-adenosyl-L-methionine = N(2)-methylguanosine(2445) in 23S rRNA + S-adenosyl-L-homocysteine + H(+)</text>
        <dbReference type="Rhea" id="RHEA:42740"/>
        <dbReference type="Rhea" id="RHEA-COMP:10215"/>
        <dbReference type="Rhea" id="RHEA-COMP:10216"/>
        <dbReference type="ChEBI" id="CHEBI:15378"/>
        <dbReference type="ChEBI" id="CHEBI:57856"/>
        <dbReference type="ChEBI" id="CHEBI:59789"/>
        <dbReference type="ChEBI" id="CHEBI:74269"/>
        <dbReference type="ChEBI" id="CHEBI:74481"/>
        <dbReference type="EC" id="2.1.1.173"/>
    </reaction>
</comment>
<comment type="catalytic activity">
    <reaction evidence="1">
        <text>guanosine(2069) in 23S rRNA + S-adenosyl-L-methionine = N(2)-methylguanosine(2069) in 23S rRNA + S-adenosyl-L-homocysteine + H(+)</text>
        <dbReference type="Rhea" id="RHEA:43772"/>
        <dbReference type="Rhea" id="RHEA-COMP:10688"/>
        <dbReference type="Rhea" id="RHEA-COMP:10689"/>
        <dbReference type="ChEBI" id="CHEBI:15378"/>
        <dbReference type="ChEBI" id="CHEBI:57856"/>
        <dbReference type="ChEBI" id="CHEBI:59789"/>
        <dbReference type="ChEBI" id="CHEBI:74269"/>
        <dbReference type="ChEBI" id="CHEBI:74481"/>
        <dbReference type="EC" id="2.1.1.264"/>
    </reaction>
</comment>
<comment type="subcellular location">
    <subcellularLocation>
        <location evidence="1">Cytoplasm</location>
    </subcellularLocation>
</comment>
<comment type="similarity">
    <text evidence="1">Belongs to the methyltransferase superfamily. RlmKL family.</text>
</comment>
<accession>Q5H029</accession>
<organism>
    <name type="scientific">Xanthomonas oryzae pv. oryzae (strain KACC10331 / KXO85)</name>
    <dbReference type="NCBI Taxonomy" id="291331"/>
    <lineage>
        <taxon>Bacteria</taxon>
        <taxon>Pseudomonadati</taxon>
        <taxon>Pseudomonadota</taxon>
        <taxon>Gammaproteobacteria</taxon>
        <taxon>Lysobacterales</taxon>
        <taxon>Lysobacteraceae</taxon>
        <taxon>Xanthomonas</taxon>
    </lineage>
</organism>
<name>RLMKL_XANOR</name>
<dbReference type="EC" id="2.1.1.173" evidence="1"/>
<dbReference type="EC" id="2.1.1.264" evidence="1"/>
<dbReference type="EMBL" id="AE013598">
    <property type="protein sequence ID" value="AAW75692.1"/>
    <property type="molecule type" value="Genomic_DNA"/>
</dbReference>
<dbReference type="SMR" id="Q5H029"/>
<dbReference type="STRING" id="291331.XOO2438"/>
<dbReference type="KEGG" id="xoo:XOO2438"/>
<dbReference type="PATRIC" id="fig|291331.8.peg.2710"/>
<dbReference type="HOGENOM" id="CLU_014042_2_0_6"/>
<dbReference type="Proteomes" id="UP000006735">
    <property type="component" value="Chromosome"/>
</dbReference>
<dbReference type="GO" id="GO:0005737">
    <property type="term" value="C:cytoplasm"/>
    <property type="evidence" value="ECO:0007669"/>
    <property type="project" value="UniProtKB-SubCell"/>
</dbReference>
<dbReference type="GO" id="GO:0052915">
    <property type="term" value="F:23S rRNA (guanine(2445)-N(2))-methyltransferase activity"/>
    <property type="evidence" value="ECO:0007669"/>
    <property type="project" value="UniProtKB-UniRule"/>
</dbReference>
<dbReference type="GO" id="GO:0003723">
    <property type="term" value="F:RNA binding"/>
    <property type="evidence" value="ECO:0007669"/>
    <property type="project" value="UniProtKB-KW"/>
</dbReference>
<dbReference type="GO" id="GO:0070043">
    <property type="term" value="F:rRNA (guanine-N7-)-methyltransferase activity"/>
    <property type="evidence" value="ECO:0007669"/>
    <property type="project" value="UniProtKB-UniRule"/>
</dbReference>
<dbReference type="CDD" id="cd02440">
    <property type="entry name" value="AdoMet_MTases"/>
    <property type="match status" value="1"/>
</dbReference>
<dbReference type="CDD" id="cd11715">
    <property type="entry name" value="THUMP_AdoMetMT"/>
    <property type="match status" value="1"/>
</dbReference>
<dbReference type="FunFam" id="3.30.750.80:FF:000003">
    <property type="entry name" value="Ribosomal RNA large subunit methyltransferase K/L"/>
    <property type="match status" value="1"/>
</dbReference>
<dbReference type="Gene3D" id="3.30.2130.30">
    <property type="match status" value="1"/>
</dbReference>
<dbReference type="Gene3D" id="3.30.750.80">
    <property type="entry name" value="RNA methyltransferase domain (HRMD) like"/>
    <property type="match status" value="1"/>
</dbReference>
<dbReference type="Gene3D" id="3.40.50.150">
    <property type="entry name" value="Vaccinia Virus protein VP39"/>
    <property type="match status" value="2"/>
</dbReference>
<dbReference type="HAMAP" id="MF_01858">
    <property type="entry name" value="23SrRNA_methyltr_KL"/>
    <property type="match status" value="1"/>
</dbReference>
<dbReference type="InterPro" id="IPR017244">
    <property type="entry name" value="23SrRNA_methyltr_KL"/>
</dbReference>
<dbReference type="InterPro" id="IPR002052">
    <property type="entry name" value="DNA_methylase_N6_adenine_CS"/>
</dbReference>
<dbReference type="InterPro" id="IPR000241">
    <property type="entry name" value="RlmKL-like_Mtase"/>
</dbReference>
<dbReference type="InterPro" id="IPR053943">
    <property type="entry name" value="RlmKL-like_Mtase_CS"/>
</dbReference>
<dbReference type="InterPro" id="IPR054170">
    <property type="entry name" value="RlmL_1st"/>
</dbReference>
<dbReference type="InterPro" id="IPR019614">
    <property type="entry name" value="SAM-dep_methyl-trfase"/>
</dbReference>
<dbReference type="InterPro" id="IPR029063">
    <property type="entry name" value="SAM-dependent_MTases_sf"/>
</dbReference>
<dbReference type="InterPro" id="IPR004114">
    <property type="entry name" value="THUMP_dom"/>
</dbReference>
<dbReference type="NCBIfam" id="NF008748">
    <property type="entry name" value="PRK11783.1"/>
    <property type="match status" value="1"/>
</dbReference>
<dbReference type="PANTHER" id="PTHR47313">
    <property type="entry name" value="RIBOSOMAL RNA LARGE SUBUNIT METHYLTRANSFERASE K/L"/>
    <property type="match status" value="1"/>
</dbReference>
<dbReference type="PANTHER" id="PTHR47313:SF1">
    <property type="entry name" value="RIBOSOMAL RNA LARGE SUBUNIT METHYLTRANSFERASE K_L"/>
    <property type="match status" value="1"/>
</dbReference>
<dbReference type="Pfam" id="PF10672">
    <property type="entry name" value="Methyltrans_SAM"/>
    <property type="match status" value="1"/>
</dbReference>
<dbReference type="Pfam" id="PF22020">
    <property type="entry name" value="RlmL_1st"/>
    <property type="match status" value="1"/>
</dbReference>
<dbReference type="Pfam" id="PF02926">
    <property type="entry name" value="THUMP"/>
    <property type="match status" value="1"/>
</dbReference>
<dbReference type="Pfam" id="PF01170">
    <property type="entry name" value="UPF0020"/>
    <property type="match status" value="1"/>
</dbReference>
<dbReference type="PIRSF" id="PIRSF037618">
    <property type="entry name" value="RNA_Mtase_bacteria_prd"/>
    <property type="match status" value="1"/>
</dbReference>
<dbReference type="SMART" id="SM00981">
    <property type="entry name" value="THUMP"/>
    <property type="match status" value="1"/>
</dbReference>
<dbReference type="SUPFAM" id="SSF53335">
    <property type="entry name" value="S-adenosyl-L-methionine-dependent methyltransferases"/>
    <property type="match status" value="2"/>
</dbReference>
<dbReference type="PROSITE" id="PS51165">
    <property type="entry name" value="THUMP"/>
    <property type="match status" value="1"/>
</dbReference>
<dbReference type="PROSITE" id="PS01261">
    <property type="entry name" value="UPF0020"/>
    <property type="match status" value="1"/>
</dbReference>
<gene>
    <name evidence="1" type="primary">rlmL</name>
    <name type="ordered locus">XOO2438</name>
</gene>
<keyword id="KW-0963">Cytoplasm</keyword>
<keyword id="KW-0489">Methyltransferase</keyword>
<keyword id="KW-1185">Reference proteome</keyword>
<keyword id="KW-0694">RNA-binding</keyword>
<keyword id="KW-0698">rRNA processing</keyword>
<keyword id="KW-0949">S-adenosyl-L-methionine</keyword>
<keyword id="KW-0808">Transferase</keyword>